<keyword id="KW-0012">Acyltransferase</keyword>
<keyword id="KW-0997">Cell inner membrane</keyword>
<keyword id="KW-1003">Cell membrane</keyword>
<keyword id="KW-0444">Lipid biosynthesis</keyword>
<keyword id="KW-0443">Lipid metabolism</keyword>
<keyword id="KW-0472">Membrane</keyword>
<keyword id="KW-0594">Phospholipid biosynthesis</keyword>
<keyword id="KW-1208">Phospholipid metabolism</keyword>
<keyword id="KW-0808">Transferase</keyword>
<reference key="1">
    <citation type="journal article" date="2003" name="Lancet">
        <title>Genome sequence of Vibrio parahaemolyticus: a pathogenic mechanism distinct from that of V. cholerae.</title>
        <authorList>
            <person name="Makino K."/>
            <person name="Oshima K."/>
            <person name="Kurokawa K."/>
            <person name="Yokoyama K."/>
            <person name="Uda T."/>
            <person name="Tagomori K."/>
            <person name="Iijima Y."/>
            <person name="Najima M."/>
            <person name="Nakano M."/>
            <person name="Yamashita A."/>
            <person name="Kubota Y."/>
            <person name="Kimura S."/>
            <person name="Yasunaga T."/>
            <person name="Honda T."/>
            <person name="Shinagawa H."/>
            <person name="Hattori M."/>
            <person name="Iida T."/>
        </authorList>
    </citation>
    <scope>NUCLEOTIDE SEQUENCE [LARGE SCALE GENOMIC DNA]</scope>
    <source>
        <strain>RIMD 2210633</strain>
    </source>
</reference>
<dbReference type="EC" id="2.3.1.15" evidence="1"/>
<dbReference type="EMBL" id="BA000031">
    <property type="protein sequence ID" value="BAC61210.1"/>
    <property type="molecule type" value="Genomic_DNA"/>
</dbReference>
<dbReference type="RefSeq" id="NP_799326.1">
    <property type="nucleotide sequence ID" value="NC_004603.1"/>
</dbReference>
<dbReference type="RefSeq" id="WP_005460370.1">
    <property type="nucleotide sequence ID" value="NC_004603.1"/>
</dbReference>
<dbReference type="SMR" id="Q87KN0"/>
<dbReference type="GeneID" id="1190533"/>
<dbReference type="KEGG" id="vpa:VP2947"/>
<dbReference type="PATRIC" id="fig|223926.6.peg.2836"/>
<dbReference type="eggNOG" id="COG2937">
    <property type="taxonomic scope" value="Bacteria"/>
</dbReference>
<dbReference type="HOGENOM" id="CLU_015407_0_0_6"/>
<dbReference type="UniPathway" id="UPA00557">
    <property type="reaction ID" value="UER00612"/>
</dbReference>
<dbReference type="Proteomes" id="UP000002493">
    <property type="component" value="Chromosome 1"/>
</dbReference>
<dbReference type="GO" id="GO:0005886">
    <property type="term" value="C:plasma membrane"/>
    <property type="evidence" value="ECO:0007669"/>
    <property type="project" value="UniProtKB-SubCell"/>
</dbReference>
<dbReference type="GO" id="GO:0004366">
    <property type="term" value="F:glycerol-3-phosphate O-acyltransferase activity"/>
    <property type="evidence" value="ECO:0007669"/>
    <property type="project" value="UniProtKB-UniRule"/>
</dbReference>
<dbReference type="GO" id="GO:0016024">
    <property type="term" value="P:CDP-diacylglycerol biosynthetic process"/>
    <property type="evidence" value="ECO:0007669"/>
    <property type="project" value="UniProtKB-UniRule"/>
</dbReference>
<dbReference type="GO" id="GO:0006631">
    <property type="term" value="P:fatty acid metabolic process"/>
    <property type="evidence" value="ECO:0007669"/>
    <property type="project" value="TreeGrafter"/>
</dbReference>
<dbReference type="CDD" id="cd07993">
    <property type="entry name" value="LPLAT_DHAPAT-like"/>
    <property type="match status" value="1"/>
</dbReference>
<dbReference type="HAMAP" id="MF_00393">
    <property type="entry name" value="Glyc3P_acyltrans"/>
    <property type="match status" value="1"/>
</dbReference>
<dbReference type="InterPro" id="IPR022284">
    <property type="entry name" value="GPAT/DHAPAT"/>
</dbReference>
<dbReference type="InterPro" id="IPR045520">
    <property type="entry name" value="GPAT/DHAPAT_C"/>
</dbReference>
<dbReference type="InterPro" id="IPR041728">
    <property type="entry name" value="GPAT/DHAPAT_LPLAT"/>
</dbReference>
<dbReference type="InterPro" id="IPR028354">
    <property type="entry name" value="GPAT_PlsB"/>
</dbReference>
<dbReference type="InterPro" id="IPR002123">
    <property type="entry name" value="Plipid/glycerol_acylTrfase"/>
</dbReference>
<dbReference type="NCBIfam" id="TIGR03703">
    <property type="entry name" value="plsB"/>
    <property type="match status" value="1"/>
</dbReference>
<dbReference type="NCBIfam" id="NF003441">
    <property type="entry name" value="PRK04974.1"/>
    <property type="match status" value="1"/>
</dbReference>
<dbReference type="PANTHER" id="PTHR12563:SF17">
    <property type="entry name" value="DIHYDROXYACETONE PHOSPHATE ACYLTRANSFERASE"/>
    <property type="match status" value="1"/>
</dbReference>
<dbReference type="PANTHER" id="PTHR12563">
    <property type="entry name" value="GLYCEROL-3-PHOSPHATE ACYLTRANSFERASE"/>
    <property type="match status" value="1"/>
</dbReference>
<dbReference type="Pfam" id="PF01553">
    <property type="entry name" value="Acyltransferase"/>
    <property type="match status" value="1"/>
</dbReference>
<dbReference type="Pfam" id="PF19277">
    <property type="entry name" value="GPAT_C"/>
    <property type="match status" value="1"/>
</dbReference>
<dbReference type="PIRSF" id="PIRSF500064">
    <property type="entry name" value="GPAT"/>
    <property type="match status" value="1"/>
</dbReference>
<dbReference type="PIRSF" id="PIRSF000437">
    <property type="entry name" value="GPAT_DHAPAT"/>
    <property type="match status" value="1"/>
</dbReference>
<dbReference type="SMART" id="SM00563">
    <property type="entry name" value="PlsC"/>
    <property type="match status" value="1"/>
</dbReference>
<dbReference type="SUPFAM" id="SSF69593">
    <property type="entry name" value="Glycerol-3-phosphate (1)-acyltransferase"/>
    <property type="match status" value="1"/>
</dbReference>
<gene>
    <name evidence="1" type="primary">plsB</name>
    <name type="ordered locus">VP2947</name>
</gene>
<proteinExistence type="inferred from homology"/>
<name>PLSB_VIBPA</name>
<feature type="chain" id="PRO_0000195236" description="Glycerol-3-phosphate acyltransferase">
    <location>
        <begin position="1"/>
        <end position="808"/>
    </location>
</feature>
<feature type="short sequence motif" description="HXXXXD motif">
    <location>
        <begin position="306"/>
        <end position="311"/>
    </location>
</feature>
<protein>
    <recommendedName>
        <fullName evidence="1">Glycerol-3-phosphate acyltransferase</fullName>
        <shortName evidence="1">GPAT</shortName>
        <ecNumber evidence="1">2.3.1.15</ecNumber>
    </recommendedName>
</protein>
<sequence>MSSGQSFSRSLLKLPLSVMVKGTTIPSNPIDDLNIDLTKPIVYALPFRSNVDLLTLQKQAMSLGLPDPLSPLEINGKTLNRFVFIASRPTVMGNDNDIPTDSVSLFTELLELHKLDSELDVQMIPATVLWGRKPGKEESHRPYLQPMNGPQKAKAVMAAGRDCLVRFSPVVSLRYMADSHGTDSAIAHKLARVARIHFSRQKLAASGPNLPQRQVLFARLLKSPAIEQAIEDEAKSKDISIEKARKEAHDIMDEIAADFSYGLVKNGDRILSWLWTKLYQGLHINNASTVRRLAQDGHEIVYVPCHRSHMDYLLLSYVLYHEGMVPPHIAAGINLNFFPAGPIFRRGGAFFIRRSFKGNKLYSTIFREYLAELFAKGYSVEYFSEGGRSRTGRLLQAKTGMLAMTIQAMLRGLNRPVTLVPVYIGYEHVMEVGTYAKELRGKRKEKENAGLVLRTLRKLRNFGLGYVNFGEPIQLNQYLNEHAPEWTKDIDSMGGSKPQWMNPVVNELANKMMTHINDAAAANALTLCATALLASRQRALSRDSLINQIECYLKLLKNNPYSSTSTIPTESAEELVDHAISLDKFVIETDSMGDIISLDRSQSILMTYYRNNIIHLFALPSLIAQMIIRQRNLTVEKIQENVAQIYPFLKKELFLSYQEEDLNDLVVKTLNEFAEQKMICLDGNKLEINQSNNQPLVLLGRTITETLQRYSIAMNLLVAYPELGKSDLEQKSQDIAQRLGRLHGINAPEFFDKGVFTAMFNTLKQQEYLDSDGNCDKKKTQKFAKLLFTLLYPEVKLTIEESIHQLQA</sequence>
<accession>Q87KN0</accession>
<evidence type="ECO:0000255" key="1">
    <source>
        <dbReference type="HAMAP-Rule" id="MF_00393"/>
    </source>
</evidence>
<organism>
    <name type="scientific">Vibrio parahaemolyticus serotype O3:K6 (strain RIMD 2210633)</name>
    <dbReference type="NCBI Taxonomy" id="223926"/>
    <lineage>
        <taxon>Bacteria</taxon>
        <taxon>Pseudomonadati</taxon>
        <taxon>Pseudomonadota</taxon>
        <taxon>Gammaproteobacteria</taxon>
        <taxon>Vibrionales</taxon>
        <taxon>Vibrionaceae</taxon>
        <taxon>Vibrio</taxon>
    </lineage>
</organism>
<comment type="catalytic activity">
    <reaction evidence="1">
        <text>sn-glycerol 3-phosphate + an acyl-CoA = a 1-acyl-sn-glycero-3-phosphate + CoA</text>
        <dbReference type="Rhea" id="RHEA:15325"/>
        <dbReference type="ChEBI" id="CHEBI:57287"/>
        <dbReference type="ChEBI" id="CHEBI:57597"/>
        <dbReference type="ChEBI" id="CHEBI:57970"/>
        <dbReference type="ChEBI" id="CHEBI:58342"/>
        <dbReference type="EC" id="2.3.1.15"/>
    </reaction>
</comment>
<comment type="pathway">
    <text evidence="1">Phospholipid metabolism; CDP-diacylglycerol biosynthesis; CDP-diacylglycerol from sn-glycerol 3-phosphate: step 1/3.</text>
</comment>
<comment type="subcellular location">
    <subcellularLocation>
        <location evidence="1">Cell inner membrane</location>
        <topology evidence="1">Peripheral membrane protein</topology>
        <orientation evidence="1">Cytoplasmic side</orientation>
    </subcellularLocation>
</comment>
<comment type="domain">
    <text evidence="1">The HXXXXD motif is essential for acyltransferase activity and may constitute the binding site for the phosphate moiety of the glycerol-3-phosphate.</text>
</comment>
<comment type="similarity">
    <text evidence="1">Belongs to the GPAT/DAPAT family.</text>
</comment>